<evidence type="ECO:0000255" key="1">
    <source>
        <dbReference type="PROSITE-ProRule" id="PRU00024"/>
    </source>
</evidence>
<evidence type="ECO:0000255" key="2">
    <source>
        <dbReference type="PROSITE-ProRule" id="PRU00357"/>
    </source>
</evidence>
<evidence type="ECO:0000256" key="3">
    <source>
        <dbReference type="SAM" id="MobiDB-lite"/>
    </source>
</evidence>
<evidence type="ECO:0000305" key="4"/>
<gene>
    <name type="primary">COL10</name>
    <name type="ordered locus">At5g48250</name>
    <name type="ORF">MIF21.14</name>
</gene>
<dbReference type="EMBL" id="AB023039">
    <property type="protein sequence ID" value="BAA97005.1"/>
    <property type="molecule type" value="Genomic_DNA"/>
</dbReference>
<dbReference type="EMBL" id="CP002688">
    <property type="protein sequence ID" value="AED95643.1"/>
    <property type="molecule type" value="Genomic_DNA"/>
</dbReference>
<dbReference type="EMBL" id="AY039957">
    <property type="protein sequence ID" value="AAK64061.1"/>
    <property type="molecule type" value="mRNA"/>
</dbReference>
<dbReference type="EMBL" id="AY142607">
    <property type="protein sequence ID" value="AAN13176.1"/>
    <property type="molecule type" value="mRNA"/>
</dbReference>
<dbReference type="RefSeq" id="NP_199636.1">
    <property type="nucleotide sequence ID" value="NM_124200.3"/>
</dbReference>
<dbReference type="SMR" id="Q9LUA9"/>
<dbReference type="BioGRID" id="20125">
    <property type="interactions" value="1"/>
</dbReference>
<dbReference type="FunCoup" id="Q9LUA9">
    <property type="interactions" value="107"/>
</dbReference>
<dbReference type="IntAct" id="Q9LUA9">
    <property type="interactions" value="2"/>
</dbReference>
<dbReference type="STRING" id="3702.Q9LUA9"/>
<dbReference type="iPTMnet" id="Q9LUA9"/>
<dbReference type="PaxDb" id="3702-AT5G48250.1"/>
<dbReference type="ProteomicsDB" id="241095"/>
<dbReference type="EnsemblPlants" id="AT5G48250.1">
    <property type="protein sequence ID" value="AT5G48250.1"/>
    <property type="gene ID" value="AT5G48250"/>
</dbReference>
<dbReference type="GeneID" id="834878"/>
<dbReference type="Gramene" id="AT5G48250.1">
    <property type="protein sequence ID" value="AT5G48250.1"/>
    <property type="gene ID" value="AT5G48250"/>
</dbReference>
<dbReference type="KEGG" id="ath:AT5G48250"/>
<dbReference type="Araport" id="AT5G48250"/>
<dbReference type="TAIR" id="AT5G48250">
    <property type="gene designation" value="BBX8"/>
</dbReference>
<dbReference type="eggNOG" id="ENOG502QUBA">
    <property type="taxonomic scope" value="Eukaryota"/>
</dbReference>
<dbReference type="HOGENOM" id="CLU_028225_0_1_1"/>
<dbReference type="InParanoid" id="Q9LUA9"/>
<dbReference type="OMA" id="ESACEQG"/>
<dbReference type="OrthoDB" id="153872at2759"/>
<dbReference type="PhylomeDB" id="Q9LUA9"/>
<dbReference type="PRO" id="PR:Q9LUA9"/>
<dbReference type="Proteomes" id="UP000006548">
    <property type="component" value="Chromosome 5"/>
</dbReference>
<dbReference type="ExpressionAtlas" id="Q9LUA9">
    <property type="expression patterns" value="baseline and differential"/>
</dbReference>
<dbReference type="GO" id="GO:0005634">
    <property type="term" value="C:nucleus"/>
    <property type="evidence" value="ECO:0007669"/>
    <property type="project" value="UniProtKB-SubCell"/>
</dbReference>
<dbReference type="GO" id="GO:0003700">
    <property type="term" value="F:DNA-binding transcription factor activity"/>
    <property type="evidence" value="ECO:0000250"/>
    <property type="project" value="TAIR"/>
</dbReference>
<dbReference type="GO" id="GO:0008270">
    <property type="term" value="F:zinc ion binding"/>
    <property type="evidence" value="ECO:0007669"/>
    <property type="project" value="UniProtKB-KW"/>
</dbReference>
<dbReference type="CDD" id="cd19821">
    <property type="entry name" value="Bbox1_BBX-like"/>
    <property type="match status" value="2"/>
</dbReference>
<dbReference type="InterPro" id="IPR010402">
    <property type="entry name" value="CCT_domain"/>
</dbReference>
<dbReference type="InterPro" id="IPR049808">
    <property type="entry name" value="CONSTANS-like_Bbox1"/>
</dbReference>
<dbReference type="InterPro" id="IPR000315">
    <property type="entry name" value="Znf_B-box"/>
</dbReference>
<dbReference type="PANTHER" id="PTHR31717">
    <property type="entry name" value="ZINC FINGER PROTEIN CONSTANS-LIKE 10"/>
    <property type="match status" value="1"/>
</dbReference>
<dbReference type="PANTHER" id="PTHR31717:SF140">
    <property type="entry name" value="ZINC FINGER PROTEIN CONSTANS-LIKE 10"/>
    <property type="match status" value="1"/>
</dbReference>
<dbReference type="Pfam" id="PF22586">
    <property type="entry name" value="ANCHR-like_BBOX"/>
    <property type="match status" value="1"/>
</dbReference>
<dbReference type="Pfam" id="PF06203">
    <property type="entry name" value="CCT"/>
    <property type="match status" value="1"/>
</dbReference>
<dbReference type="SMART" id="SM00336">
    <property type="entry name" value="BBOX"/>
    <property type="match status" value="2"/>
</dbReference>
<dbReference type="PROSITE" id="PS51017">
    <property type="entry name" value="CCT"/>
    <property type="match status" value="1"/>
</dbReference>
<dbReference type="PROSITE" id="PS50119">
    <property type="entry name" value="ZF_BBOX"/>
    <property type="match status" value="2"/>
</dbReference>
<keyword id="KW-0479">Metal-binding</keyword>
<keyword id="KW-0539">Nucleus</keyword>
<keyword id="KW-1185">Reference proteome</keyword>
<keyword id="KW-0677">Repeat</keyword>
<keyword id="KW-0862">Zinc</keyword>
<keyword id="KW-0863">Zinc-finger</keyword>
<feature type="chain" id="PRO_0000113287" description="Zinc finger protein CONSTANS-LIKE 10">
    <location>
        <begin position="1"/>
        <end position="373"/>
    </location>
</feature>
<feature type="domain" description="CCT" evidence="2">
    <location>
        <begin position="316"/>
        <end position="358"/>
    </location>
</feature>
<feature type="zinc finger region" description="B box-type 1; atypical" evidence="1">
    <location>
        <begin position="5"/>
        <end position="47"/>
    </location>
</feature>
<feature type="zinc finger region" description="B box-type 2; atypical" evidence="1">
    <location>
        <begin position="48"/>
        <end position="92"/>
    </location>
</feature>
<feature type="region of interest" description="Disordered" evidence="3">
    <location>
        <begin position="152"/>
        <end position="172"/>
    </location>
</feature>
<feature type="binding site" evidence="1">
    <location>
        <position position="5"/>
    </location>
    <ligand>
        <name>Zn(2+)</name>
        <dbReference type="ChEBI" id="CHEBI:29105"/>
        <label>1</label>
    </ligand>
</feature>
<feature type="binding site" evidence="1">
    <location>
        <position position="8"/>
    </location>
    <ligand>
        <name>Zn(2+)</name>
        <dbReference type="ChEBI" id="CHEBI:29105"/>
        <label>1</label>
    </ligand>
</feature>
<feature type="binding site" evidence="1">
    <location>
        <position position="28"/>
    </location>
    <ligand>
        <name>Zn(2+)</name>
        <dbReference type="ChEBI" id="CHEBI:29105"/>
        <label>1</label>
    </ligand>
</feature>
<feature type="binding site" evidence="1">
    <location>
        <position position="33"/>
    </location>
    <ligand>
        <name>Zn(2+)</name>
        <dbReference type="ChEBI" id="CHEBI:29105"/>
        <label>1</label>
    </ligand>
</feature>
<feature type="binding site" evidence="1">
    <location>
        <position position="48"/>
    </location>
    <ligand>
        <name>Zn(2+)</name>
        <dbReference type="ChEBI" id="CHEBI:29105"/>
        <label>2</label>
    </ligand>
</feature>
<feature type="binding site" evidence="1">
    <location>
        <position position="51"/>
    </location>
    <ligand>
        <name>Zn(2+)</name>
        <dbReference type="ChEBI" id="CHEBI:29105"/>
        <label>2</label>
    </ligand>
</feature>
<feature type="binding site" evidence="1">
    <location>
        <position position="71"/>
    </location>
    <ligand>
        <name>Zn(2+)</name>
        <dbReference type="ChEBI" id="CHEBI:29105"/>
        <label>2</label>
    </ligand>
</feature>
<feature type="binding site" evidence="1">
    <location>
        <position position="76"/>
    </location>
    <ligand>
        <name>Zn(2+)</name>
        <dbReference type="ChEBI" id="CHEBI:29105"/>
        <label>2</label>
    </ligand>
</feature>
<proteinExistence type="evidence at protein level"/>
<sequence length="373" mass="41245">MGYMCDFCGEQRSMVYCRSDAACLCLSCDRNVHSANALSKRHSRTLVCERCNAQPASVRCSDERVSLCQNCDWSGHDGKNSTTTSHHKRQTINCYSGCPSSAELSSIWSFCMDLNISSAEESACEQGMGLMTIDEDGTGEKSGVQKINVEQPETSSAAQGMDHSSVPENSSMAKELGVCEDDFNGNLISDEVDLALENYEELFGSAFNSSRYLFEHGGIGSLFEKDEAHEGSMQQPALSNNASADSFMTCRTEPIICYSSKPAHSNISFSGITGESNAGDFQDCGASSMKQLSREPQPWCHPTAQDIIASSHATTRNNAVMRYKEKKKARKFDKRVRYVSRKERADVRRRVKGRFVKSGEAYDYDPMSPTRSY</sequence>
<protein>
    <recommendedName>
        <fullName>Zinc finger protein CONSTANS-LIKE 10</fullName>
    </recommendedName>
</protein>
<accession>Q9LUA9</accession>
<organism>
    <name type="scientific">Arabidopsis thaliana</name>
    <name type="common">Mouse-ear cress</name>
    <dbReference type="NCBI Taxonomy" id="3702"/>
    <lineage>
        <taxon>Eukaryota</taxon>
        <taxon>Viridiplantae</taxon>
        <taxon>Streptophyta</taxon>
        <taxon>Embryophyta</taxon>
        <taxon>Tracheophyta</taxon>
        <taxon>Spermatophyta</taxon>
        <taxon>Magnoliopsida</taxon>
        <taxon>eudicotyledons</taxon>
        <taxon>Gunneridae</taxon>
        <taxon>Pentapetalae</taxon>
        <taxon>rosids</taxon>
        <taxon>malvids</taxon>
        <taxon>Brassicales</taxon>
        <taxon>Brassicaceae</taxon>
        <taxon>Camelineae</taxon>
        <taxon>Arabidopsis</taxon>
    </lineage>
</organism>
<comment type="interaction">
    <interactant intactId="EBI-2434870">
        <id>Q9LUA9</id>
    </interactant>
    <interactant intactId="EBI-2118043">
        <id>Q8RY59</id>
        <label>RCD1</label>
    </interactant>
    <organismsDiffer>false</organismsDiffer>
    <experiments>3</experiments>
</comment>
<comment type="subcellular location">
    <subcellularLocation>
        <location evidence="2">Nucleus</location>
    </subcellularLocation>
</comment>
<comment type="similarity">
    <text evidence="4">Belongs to the CONSTANS family.</text>
</comment>
<name>COL10_ARATH</name>
<reference key="1">
    <citation type="journal article" date="2000" name="DNA Res.">
        <title>Structural analysis of Arabidopsis thaliana chromosome 5. X. Sequence features of the regions of 3,076,755 bp covered by sixty P1 and TAC clones.</title>
        <authorList>
            <person name="Sato S."/>
            <person name="Nakamura Y."/>
            <person name="Kaneko T."/>
            <person name="Katoh T."/>
            <person name="Asamizu E."/>
            <person name="Kotani H."/>
            <person name="Tabata S."/>
        </authorList>
    </citation>
    <scope>NUCLEOTIDE SEQUENCE [LARGE SCALE GENOMIC DNA]</scope>
    <source>
        <strain>cv. Columbia</strain>
    </source>
</reference>
<reference key="2">
    <citation type="journal article" date="2017" name="Plant J.">
        <title>Araport11: a complete reannotation of the Arabidopsis thaliana reference genome.</title>
        <authorList>
            <person name="Cheng C.Y."/>
            <person name="Krishnakumar V."/>
            <person name="Chan A.P."/>
            <person name="Thibaud-Nissen F."/>
            <person name="Schobel S."/>
            <person name="Town C.D."/>
        </authorList>
    </citation>
    <scope>GENOME REANNOTATION</scope>
    <source>
        <strain>cv. Columbia</strain>
    </source>
</reference>
<reference key="3">
    <citation type="journal article" date="2003" name="Science">
        <title>Empirical analysis of transcriptional activity in the Arabidopsis genome.</title>
        <authorList>
            <person name="Yamada K."/>
            <person name="Lim J."/>
            <person name="Dale J.M."/>
            <person name="Chen H."/>
            <person name="Shinn P."/>
            <person name="Palm C.J."/>
            <person name="Southwick A.M."/>
            <person name="Wu H.C."/>
            <person name="Kim C.J."/>
            <person name="Nguyen M."/>
            <person name="Pham P.K."/>
            <person name="Cheuk R.F."/>
            <person name="Karlin-Newmann G."/>
            <person name="Liu S.X."/>
            <person name="Lam B."/>
            <person name="Sakano H."/>
            <person name="Wu T."/>
            <person name="Yu G."/>
            <person name="Miranda M."/>
            <person name="Quach H.L."/>
            <person name="Tripp M."/>
            <person name="Chang C.H."/>
            <person name="Lee J.M."/>
            <person name="Toriumi M.J."/>
            <person name="Chan M.M."/>
            <person name="Tang C.C."/>
            <person name="Onodera C.S."/>
            <person name="Deng J.M."/>
            <person name="Akiyama K."/>
            <person name="Ansari Y."/>
            <person name="Arakawa T."/>
            <person name="Banh J."/>
            <person name="Banno F."/>
            <person name="Bowser L."/>
            <person name="Brooks S.Y."/>
            <person name="Carninci P."/>
            <person name="Chao Q."/>
            <person name="Choy N."/>
            <person name="Enju A."/>
            <person name="Goldsmith A.D."/>
            <person name="Gurjal M."/>
            <person name="Hansen N.F."/>
            <person name="Hayashizaki Y."/>
            <person name="Johnson-Hopson C."/>
            <person name="Hsuan V.W."/>
            <person name="Iida K."/>
            <person name="Karnes M."/>
            <person name="Khan S."/>
            <person name="Koesema E."/>
            <person name="Ishida J."/>
            <person name="Jiang P.X."/>
            <person name="Jones T."/>
            <person name="Kawai J."/>
            <person name="Kamiya A."/>
            <person name="Meyers C."/>
            <person name="Nakajima M."/>
            <person name="Narusaka M."/>
            <person name="Seki M."/>
            <person name="Sakurai T."/>
            <person name="Satou M."/>
            <person name="Tamse R."/>
            <person name="Vaysberg M."/>
            <person name="Wallender E.K."/>
            <person name="Wong C."/>
            <person name="Yamamura Y."/>
            <person name="Yuan S."/>
            <person name="Shinozaki K."/>
            <person name="Davis R.W."/>
            <person name="Theologis A."/>
            <person name="Ecker J.R."/>
        </authorList>
    </citation>
    <scope>NUCLEOTIDE SEQUENCE [LARGE SCALE MRNA]</scope>
    <source>
        <strain>cv. Columbia</strain>
    </source>
</reference>
<reference key="4">
    <citation type="journal article" date="2003" name="Plant Physiol.">
        <title>The evolution of CONSTANS-like gene families in barley, rice, and Arabidopsis.</title>
        <authorList>
            <person name="Griffiths S."/>
            <person name="Dunford R.P."/>
            <person name="Coupland G."/>
            <person name="Laurie D.A."/>
        </authorList>
    </citation>
    <scope>GENE FAMILY</scope>
    <scope>NOMENCLATURE</scope>
</reference>